<keyword id="KW-1003">Cell membrane</keyword>
<keyword id="KW-0868">Chloride</keyword>
<keyword id="KW-0869">Chloride channel</keyword>
<keyword id="KW-1015">Disulfide bond</keyword>
<keyword id="KW-0325">Glycoprotein</keyword>
<keyword id="KW-0407">Ion channel</keyword>
<keyword id="KW-0406">Ion transport</keyword>
<keyword id="KW-1071">Ligand-gated ion channel</keyword>
<keyword id="KW-0472">Membrane</keyword>
<keyword id="KW-0628">Postsynaptic cell membrane</keyword>
<keyword id="KW-0675">Receptor</keyword>
<keyword id="KW-0732">Signal</keyword>
<keyword id="KW-0770">Synapse</keyword>
<keyword id="KW-0812">Transmembrane</keyword>
<keyword id="KW-1133">Transmembrane helix</keyword>
<keyword id="KW-0813">Transport</keyword>
<proteinExistence type="evidence at transcript level"/>
<accession>P91730</accession>
<comment type="function">
    <text evidence="1">Glutamate-gated chloride channel subunit; channel properties may be modulated by the formation of heteromeric channels. Glutamate binding triggers a rapidly reversible current, while the anti-helmintic drug ivermectin triggers a permanently open channel configuration.</text>
</comment>
<comment type="subunit">
    <text evidence="1">Pentamer (By similarity).</text>
</comment>
<comment type="subcellular location">
    <subcellularLocation>
        <location evidence="2">Postsynaptic cell membrane</location>
        <topology evidence="2">Multi-pass membrane protein</topology>
    </subcellularLocation>
    <subcellularLocation>
        <location evidence="2">Cell membrane</location>
        <topology evidence="2">Multi-pass membrane protein</topology>
    </subcellularLocation>
</comment>
<comment type="tissue specificity">
    <text evidence="4">Expressed in motor neuron commissures at the anterior portion of the worms.</text>
</comment>
<comment type="similarity">
    <text evidence="5">Belongs to the ligand-gated ion channel (TC 1.A.9) family. Glutamate-gated chloride channel (TC 1.A.9.4) subfamily.</text>
</comment>
<name>GLUCB_HAECO</name>
<evidence type="ECO:0000250" key="1">
    <source>
        <dbReference type="UniProtKB" id="G5EBR3"/>
    </source>
</evidence>
<evidence type="ECO:0000250" key="2">
    <source>
        <dbReference type="UniProtKB" id="Q94900"/>
    </source>
</evidence>
<evidence type="ECO:0000255" key="3"/>
<evidence type="ECO:0000269" key="4">
    <source>
    </source>
</evidence>
<evidence type="ECO:0000305" key="5"/>
<feature type="signal peptide" evidence="3">
    <location>
        <begin position="1"/>
        <end position="18"/>
    </location>
</feature>
<feature type="chain" id="PRO_0000255717" description="Glutamate-gated chloride channel subunit beta">
    <location>
        <begin position="19"/>
        <end position="432"/>
    </location>
</feature>
<feature type="topological domain" description="Extracellular" evidence="1">
    <location>
        <begin position="19"/>
        <end position="249"/>
    </location>
</feature>
<feature type="transmembrane region" description="Helical; Name=1" evidence="1">
    <location>
        <begin position="250"/>
        <end position="272"/>
    </location>
</feature>
<feature type="topological domain" description="Cytoplasmic" evidence="1">
    <location>
        <begin position="273"/>
        <end position="277"/>
    </location>
</feature>
<feature type="transmembrane region" description="Helical; Name=2" evidence="1">
    <location>
        <begin position="278"/>
        <end position="299"/>
    </location>
</feature>
<feature type="topological domain" description="Extracellular" evidence="1">
    <location>
        <begin position="300"/>
        <end position="306"/>
    </location>
</feature>
<feature type="transmembrane region" description="Helical; Name=3" evidence="1">
    <location>
        <begin position="307"/>
        <end position="327"/>
    </location>
</feature>
<feature type="topological domain" description="Cytoplasmic" evidence="1">
    <location>
        <begin position="328"/>
        <end position="402"/>
    </location>
</feature>
<feature type="transmembrane region" description="Helical; Name=4" evidence="1">
    <location>
        <begin position="403"/>
        <end position="426"/>
    </location>
</feature>
<feature type="topological domain" description="Extracellular" evidence="1">
    <location>
        <begin position="427"/>
        <end position="432"/>
    </location>
</feature>
<feature type="binding site" evidence="1">
    <location>
        <position position="69"/>
    </location>
    <ligand>
        <name>L-glutamate</name>
        <dbReference type="ChEBI" id="CHEBI:29985"/>
    </ligand>
</feature>
<feature type="binding site" evidence="1">
    <location>
        <position position="88"/>
    </location>
    <ligand>
        <name>L-glutamate</name>
        <dbReference type="ChEBI" id="CHEBI:29985"/>
    </ligand>
</feature>
<feature type="binding site" evidence="1">
    <location>
        <position position="155"/>
    </location>
    <ligand>
        <name>L-glutamate</name>
        <dbReference type="ChEBI" id="CHEBI:29985"/>
    </ligand>
</feature>
<feature type="binding site" evidence="1">
    <location>
        <position position="184"/>
    </location>
    <ligand>
        <name>L-glutamate</name>
        <dbReference type="ChEBI" id="CHEBI:29985"/>
    </ligand>
</feature>
<feature type="glycosylation site" description="N-linked (GlcNAc...) asparagine" evidence="3">
    <location>
        <position position="52"/>
    </location>
</feature>
<feature type="glycosylation site" description="N-linked (GlcNAc...) asparagine" evidence="3">
    <location>
        <position position="219"/>
    </location>
</feature>
<feature type="disulfide bond" evidence="1">
    <location>
        <begin position="164"/>
        <end position="178"/>
    </location>
</feature>
<feature type="disulfide bond" evidence="1">
    <location>
        <begin position="226"/>
        <end position="237"/>
    </location>
</feature>
<reference key="1">
    <citation type="journal article" date="1998" name="Mol. Biochem. Parasitol.">
        <title>Cloning and localisation of an avermectin receptor-related subunit from Haemonchus contortus.</title>
        <authorList>
            <person name="Delany N.S."/>
            <person name="Laughton D.L."/>
            <person name="Wolstenholme A.J."/>
        </authorList>
    </citation>
    <scope>NUCLEOTIDE SEQUENCE [MRNA]</scope>
    <scope>TISSUE SPECIFICITY</scope>
</reference>
<dbReference type="EMBL" id="Y09796">
    <property type="protein sequence ID" value="CAA70929.1"/>
    <property type="molecule type" value="mRNA"/>
</dbReference>
<dbReference type="SMR" id="P91730"/>
<dbReference type="ChEMBL" id="CHEMBL2363050"/>
<dbReference type="DrugCentral" id="P91730"/>
<dbReference type="TCDB" id="1.A.9.4.3">
    <property type="family name" value="the neurotransmitter receptor, cys loop, ligand-gated ion channel (lic) family"/>
</dbReference>
<dbReference type="Proteomes" id="UP000025227">
    <property type="component" value="Unplaced"/>
</dbReference>
<dbReference type="GO" id="GO:0034707">
    <property type="term" value="C:chloride channel complex"/>
    <property type="evidence" value="ECO:0007669"/>
    <property type="project" value="UniProtKB-KW"/>
</dbReference>
<dbReference type="GO" id="GO:0045211">
    <property type="term" value="C:postsynaptic membrane"/>
    <property type="evidence" value="ECO:0007669"/>
    <property type="project" value="UniProtKB-SubCell"/>
</dbReference>
<dbReference type="GO" id="GO:0005254">
    <property type="term" value="F:chloride channel activity"/>
    <property type="evidence" value="ECO:0007669"/>
    <property type="project" value="UniProtKB-KW"/>
</dbReference>
<dbReference type="GO" id="GO:0005230">
    <property type="term" value="F:extracellular ligand-gated monoatomic ion channel activity"/>
    <property type="evidence" value="ECO:0007669"/>
    <property type="project" value="InterPro"/>
</dbReference>
<dbReference type="GO" id="GO:0004888">
    <property type="term" value="F:transmembrane signaling receptor activity"/>
    <property type="evidence" value="ECO:0007669"/>
    <property type="project" value="InterPro"/>
</dbReference>
<dbReference type="CDD" id="cd18993">
    <property type="entry name" value="LGIC_ECD_GluCl"/>
    <property type="match status" value="1"/>
</dbReference>
<dbReference type="CDD" id="cd19062">
    <property type="entry name" value="LGIC_TM_GluCl"/>
    <property type="match status" value="1"/>
</dbReference>
<dbReference type="FunFam" id="2.70.170.10:FF:000022">
    <property type="entry name" value="glutamate-gated chloride channel isoform X1"/>
    <property type="match status" value="1"/>
</dbReference>
<dbReference type="FunFam" id="1.20.58.390:FF:000084">
    <property type="entry name" value="Glutamate-gated chloride channel subunit beta"/>
    <property type="match status" value="1"/>
</dbReference>
<dbReference type="Gene3D" id="2.70.170.10">
    <property type="entry name" value="Neurotransmitter-gated ion-channel ligand-binding domain"/>
    <property type="match status" value="1"/>
</dbReference>
<dbReference type="Gene3D" id="1.20.58.390">
    <property type="entry name" value="Neurotransmitter-gated ion-channel transmembrane domain"/>
    <property type="match status" value="1"/>
</dbReference>
<dbReference type="InterPro" id="IPR006028">
    <property type="entry name" value="GABAA/Glycine_rcpt"/>
</dbReference>
<dbReference type="InterPro" id="IPR044721">
    <property type="entry name" value="GluCl_TM"/>
</dbReference>
<dbReference type="InterPro" id="IPR006202">
    <property type="entry name" value="Neur_chan_lig-bd"/>
</dbReference>
<dbReference type="InterPro" id="IPR036734">
    <property type="entry name" value="Neur_chan_lig-bd_sf"/>
</dbReference>
<dbReference type="InterPro" id="IPR006201">
    <property type="entry name" value="Neur_channel"/>
</dbReference>
<dbReference type="InterPro" id="IPR036719">
    <property type="entry name" value="Neuro-gated_channel_TM_sf"/>
</dbReference>
<dbReference type="InterPro" id="IPR038050">
    <property type="entry name" value="Neuro_actylchol_rec"/>
</dbReference>
<dbReference type="InterPro" id="IPR006029">
    <property type="entry name" value="Neurotrans-gated_channel_TM"/>
</dbReference>
<dbReference type="InterPro" id="IPR018000">
    <property type="entry name" value="Neurotransmitter_ion_chnl_CS"/>
</dbReference>
<dbReference type="NCBIfam" id="TIGR00860">
    <property type="entry name" value="LIC"/>
    <property type="match status" value="1"/>
</dbReference>
<dbReference type="PANTHER" id="PTHR18945">
    <property type="entry name" value="NEUROTRANSMITTER GATED ION CHANNEL"/>
    <property type="match status" value="1"/>
</dbReference>
<dbReference type="Pfam" id="PF02931">
    <property type="entry name" value="Neur_chan_LBD"/>
    <property type="match status" value="1"/>
</dbReference>
<dbReference type="Pfam" id="PF02932">
    <property type="entry name" value="Neur_chan_memb"/>
    <property type="match status" value="1"/>
</dbReference>
<dbReference type="PRINTS" id="PR00253">
    <property type="entry name" value="GABAARECEPTR"/>
</dbReference>
<dbReference type="PRINTS" id="PR00252">
    <property type="entry name" value="NRIONCHANNEL"/>
</dbReference>
<dbReference type="SUPFAM" id="SSF90112">
    <property type="entry name" value="Neurotransmitter-gated ion-channel transmembrane pore"/>
    <property type="match status" value="1"/>
</dbReference>
<dbReference type="SUPFAM" id="SSF63712">
    <property type="entry name" value="Nicotinic receptor ligand binding domain-like"/>
    <property type="match status" value="1"/>
</dbReference>
<dbReference type="PROSITE" id="PS00236">
    <property type="entry name" value="NEUROTR_ION_CHANNEL"/>
    <property type="match status" value="1"/>
</dbReference>
<sequence length="432" mass="49626">MSQYMMVAVAAVVAVAGSSQISRRSTGGTQEQEILNELLSNYDMRVRPPPSNYSDPMGPVTVRVNIMIRMLSKIDVVNMEYSMQLTFREQWLDSRLAYAHLGYHNPPKFLTVPHIKSNLWIPDTFFPTEKAAHRHLIDTDNMFLRIHPDGKVLYSSRISITSSCHMQLQLYPLDLQFCDFDLVSYAHTMKDIVYEWDPLAPVQLKPGVGSDLPNFQLTNITTNDDCTSHTNTGSYACLRMQLTLKRQFSYYLVQLYGPTTMIVIVSWVSFWIDMHSTAGRVALGVTTLLTMTTMQAAINAKLPPVSYVKVVDVWLGACQTFVFGALLEYAFVSYQDSQRQTEQAKSRAARKAQKRRAKMELVEREQYQPPCTCHLYQDYEPSFRDRLRRYFTKPDYLPAKIDYYARFCVPLGFLAFNAIYWTSCLVMVSRLV</sequence>
<organism>
    <name type="scientific">Haemonchus contortus</name>
    <name type="common">Barber pole worm</name>
    <dbReference type="NCBI Taxonomy" id="6289"/>
    <lineage>
        <taxon>Eukaryota</taxon>
        <taxon>Metazoa</taxon>
        <taxon>Ecdysozoa</taxon>
        <taxon>Nematoda</taxon>
        <taxon>Chromadorea</taxon>
        <taxon>Rhabditida</taxon>
        <taxon>Rhabditina</taxon>
        <taxon>Rhabditomorpha</taxon>
        <taxon>Strongyloidea</taxon>
        <taxon>Trichostrongylidae</taxon>
        <taxon>Haemonchus</taxon>
    </lineage>
</organism>
<protein>
    <recommendedName>
        <fullName>Glutamate-gated chloride channel subunit beta</fullName>
        <shortName>Glu-Cl subunit beta</shortName>
    </recommendedName>
    <alternativeName>
        <fullName>Avermectin-sensitive glutamate-gated chloride channel subunit</fullName>
    </alternativeName>
    <alternativeName>
        <fullName>HG4</fullName>
    </alternativeName>
</protein>